<name>COAX_DINSH</name>
<reference key="1">
    <citation type="journal article" date="2010" name="ISME J.">
        <title>The complete genome sequence of the algal symbiont Dinoroseobacter shibae: a hitchhiker's guide to life in the sea.</title>
        <authorList>
            <person name="Wagner-Dobler I."/>
            <person name="Ballhausen B."/>
            <person name="Berger M."/>
            <person name="Brinkhoff T."/>
            <person name="Buchholz I."/>
            <person name="Bunk B."/>
            <person name="Cypionka H."/>
            <person name="Daniel R."/>
            <person name="Drepper T."/>
            <person name="Gerdts G."/>
            <person name="Hahnke S."/>
            <person name="Han C."/>
            <person name="Jahn D."/>
            <person name="Kalhoefer D."/>
            <person name="Kiss H."/>
            <person name="Klenk H.P."/>
            <person name="Kyrpides N."/>
            <person name="Liebl W."/>
            <person name="Liesegang H."/>
            <person name="Meincke L."/>
            <person name="Pati A."/>
            <person name="Petersen J."/>
            <person name="Piekarski T."/>
            <person name="Pommerenke C."/>
            <person name="Pradella S."/>
            <person name="Pukall R."/>
            <person name="Rabus R."/>
            <person name="Stackebrandt E."/>
            <person name="Thole S."/>
            <person name="Thompson L."/>
            <person name="Tielen P."/>
            <person name="Tomasch J."/>
            <person name="von Jan M."/>
            <person name="Wanphrut N."/>
            <person name="Wichels A."/>
            <person name="Zech H."/>
            <person name="Simon M."/>
        </authorList>
    </citation>
    <scope>NUCLEOTIDE SEQUENCE [LARGE SCALE GENOMIC DNA]</scope>
    <source>
        <strain>DSM 16493 / NCIMB 14021 / DFL 12</strain>
    </source>
</reference>
<evidence type="ECO:0000255" key="1">
    <source>
        <dbReference type="HAMAP-Rule" id="MF_01274"/>
    </source>
</evidence>
<feature type="chain" id="PRO_1000085852" description="Type III pantothenate kinase">
    <location>
        <begin position="1"/>
        <end position="256"/>
    </location>
</feature>
<feature type="active site" description="Proton acceptor" evidence="1">
    <location>
        <position position="109"/>
    </location>
</feature>
<feature type="binding site" evidence="1">
    <location>
        <begin position="6"/>
        <end position="13"/>
    </location>
    <ligand>
        <name>ATP</name>
        <dbReference type="ChEBI" id="CHEBI:30616"/>
    </ligand>
</feature>
<feature type="binding site" evidence="1">
    <location>
        <begin position="107"/>
        <end position="110"/>
    </location>
    <ligand>
        <name>substrate</name>
    </ligand>
</feature>
<feature type="binding site" evidence="1">
    <location>
        <position position="129"/>
    </location>
    <ligand>
        <name>K(+)</name>
        <dbReference type="ChEBI" id="CHEBI:29103"/>
    </ligand>
</feature>
<feature type="binding site" evidence="1">
    <location>
        <position position="132"/>
    </location>
    <ligand>
        <name>ATP</name>
        <dbReference type="ChEBI" id="CHEBI:30616"/>
    </ligand>
</feature>
<feature type="binding site" evidence="1">
    <location>
        <position position="184"/>
    </location>
    <ligand>
        <name>substrate</name>
    </ligand>
</feature>
<gene>
    <name evidence="1" type="primary">coaX</name>
    <name type="ordered locus">Dshi_1331</name>
</gene>
<accession>A8LIV9</accession>
<protein>
    <recommendedName>
        <fullName evidence="1">Type III pantothenate kinase</fullName>
        <ecNumber evidence="1">2.7.1.33</ecNumber>
    </recommendedName>
    <alternativeName>
        <fullName evidence="1">PanK-III</fullName>
    </alternativeName>
    <alternativeName>
        <fullName evidence="1">Pantothenic acid kinase</fullName>
    </alternativeName>
</protein>
<organism>
    <name type="scientific">Dinoroseobacter shibae (strain DSM 16493 / NCIMB 14021 / DFL 12)</name>
    <dbReference type="NCBI Taxonomy" id="398580"/>
    <lineage>
        <taxon>Bacteria</taxon>
        <taxon>Pseudomonadati</taxon>
        <taxon>Pseudomonadota</taxon>
        <taxon>Alphaproteobacteria</taxon>
        <taxon>Rhodobacterales</taxon>
        <taxon>Roseobacteraceae</taxon>
        <taxon>Dinoroseobacter</taxon>
    </lineage>
</organism>
<dbReference type="EC" id="2.7.1.33" evidence="1"/>
<dbReference type="EMBL" id="CP000830">
    <property type="protein sequence ID" value="ABV93073.1"/>
    <property type="molecule type" value="Genomic_DNA"/>
</dbReference>
<dbReference type="RefSeq" id="WP_012178003.1">
    <property type="nucleotide sequence ID" value="NC_009952.1"/>
</dbReference>
<dbReference type="SMR" id="A8LIV9"/>
<dbReference type="STRING" id="398580.Dshi_1331"/>
<dbReference type="KEGG" id="dsh:Dshi_1331"/>
<dbReference type="eggNOG" id="COG1521">
    <property type="taxonomic scope" value="Bacteria"/>
</dbReference>
<dbReference type="HOGENOM" id="CLU_066627_1_0_5"/>
<dbReference type="OrthoDB" id="9804707at2"/>
<dbReference type="UniPathway" id="UPA00241">
    <property type="reaction ID" value="UER00352"/>
</dbReference>
<dbReference type="Proteomes" id="UP000006833">
    <property type="component" value="Chromosome"/>
</dbReference>
<dbReference type="GO" id="GO:0005737">
    <property type="term" value="C:cytoplasm"/>
    <property type="evidence" value="ECO:0007669"/>
    <property type="project" value="UniProtKB-SubCell"/>
</dbReference>
<dbReference type="GO" id="GO:0005524">
    <property type="term" value="F:ATP binding"/>
    <property type="evidence" value="ECO:0007669"/>
    <property type="project" value="UniProtKB-UniRule"/>
</dbReference>
<dbReference type="GO" id="GO:0046872">
    <property type="term" value="F:metal ion binding"/>
    <property type="evidence" value="ECO:0007669"/>
    <property type="project" value="UniProtKB-KW"/>
</dbReference>
<dbReference type="GO" id="GO:0004594">
    <property type="term" value="F:pantothenate kinase activity"/>
    <property type="evidence" value="ECO:0007669"/>
    <property type="project" value="UniProtKB-UniRule"/>
</dbReference>
<dbReference type="GO" id="GO:0015937">
    <property type="term" value="P:coenzyme A biosynthetic process"/>
    <property type="evidence" value="ECO:0007669"/>
    <property type="project" value="UniProtKB-UniRule"/>
</dbReference>
<dbReference type="CDD" id="cd24015">
    <property type="entry name" value="ASKHA_NBD_PanK-III"/>
    <property type="match status" value="1"/>
</dbReference>
<dbReference type="Gene3D" id="3.30.420.40">
    <property type="match status" value="2"/>
</dbReference>
<dbReference type="HAMAP" id="MF_01274">
    <property type="entry name" value="Pantothen_kinase_3"/>
    <property type="match status" value="1"/>
</dbReference>
<dbReference type="InterPro" id="IPR043129">
    <property type="entry name" value="ATPase_NBD"/>
</dbReference>
<dbReference type="InterPro" id="IPR004619">
    <property type="entry name" value="Type_III_PanK"/>
</dbReference>
<dbReference type="NCBIfam" id="TIGR00671">
    <property type="entry name" value="baf"/>
    <property type="match status" value="1"/>
</dbReference>
<dbReference type="NCBIfam" id="NF009844">
    <property type="entry name" value="PRK13318.1-2"/>
    <property type="match status" value="1"/>
</dbReference>
<dbReference type="NCBIfam" id="NF009855">
    <property type="entry name" value="PRK13321.1"/>
    <property type="match status" value="1"/>
</dbReference>
<dbReference type="PANTHER" id="PTHR34265">
    <property type="entry name" value="TYPE III PANTOTHENATE KINASE"/>
    <property type="match status" value="1"/>
</dbReference>
<dbReference type="PANTHER" id="PTHR34265:SF1">
    <property type="entry name" value="TYPE III PANTOTHENATE KINASE"/>
    <property type="match status" value="1"/>
</dbReference>
<dbReference type="Pfam" id="PF03309">
    <property type="entry name" value="Pan_kinase"/>
    <property type="match status" value="1"/>
</dbReference>
<dbReference type="SUPFAM" id="SSF53067">
    <property type="entry name" value="Actin-like ATPase domain"/>
    <property type="match status" value="2"/>
</dbReference>
<proteinExistence type="inferred from homology"/>
<sequence length="256" mass="27671">MLLAIDCGNTNTVFAIHDGTDFVAVWRTATEHQRTADQYYVWLQSLMQMQKIEVEITEVIISSTVPRVVFNLRVLCDRYFNCRPLVVGKPGCALPVDVRVDAGTQVGPDRLVNTVAGFTQFGGDLIVVDFGTATTFDVVDVDGAYVGGVIAPGVNLSLEALHNAAAALPHVDISMPDTVVGTNTVACMQSGVFWGYVGLVREICAQIKAERARPMRVIATGGLAPLFSQGAELFDAWVDDLTMQGLVTINSYNREA</sequence>
<comment type="function">
    <text evidence="1">Catalyzes the phosphorylation of pantothenate (Pan), the first step in CoA biosynthesis.</text>
</comment>
<comment type="catalytic activity">
    <reaction evidence="1">
        <text>(R)-pantothenate + ATP = (R)-4'-phosphopantothenate + ADP + H(+)</text>
        <dbReference type="Rhea" id="RHEA:16373"/>
        <dbReference type="ChEBI" id="CHEBI:10986"/>
        <dbReference type="ChEBI" id="CHEBI:15378"/>
        <dbReference type="ChEBI" id="CHEBI:29032"/>
        <dbReference type="ChEBI" id="CHEBI:30616"/>
        <dbReference type="ChEBI" id="CHEBI:456216"/>
        <dbReference type="EC" id="2.7.1.33"/>
    </reaction>
</comment>
<comment type="cofactor">
    <cofactor evidence="1">
        <name>NH4(+)</name>
        <dbReference type="ChEBI" id="CHEBI:28938"/>
    </cofactor>
    <cofactor evidence="1">
        <name>K(+)</name>
        <dbReference type="ChEBI" id="CHEBI:29103"/>
    </cofactor>
    <text evidence="1">A monovalent cation. Ammonium or potassium.</text>
</comment>
<comment type="pathway">
    <text evidence="1">Cofactor biosynthesis; coenzyme A biosynthesis; CoA from (R)-pantothenate: step 1/5.</text>
</comment>
<comment type="subunit">
    <text evidence="1">Homodimer.</text>
</comment>
<comment type="subcellular location">
    <subcellularLocation>
        <location evidence="1">Cytoplasm</location>
    </subcellularLocation>
</comment>
<comment type="similarity">
    <text evidence="1">Belongs to the type III pantothenate kinase family.</text>
</comment>
<keyword id="KW-0067">ATP-binding</keyword>
<keyword id="KW-0173">Coenzyme A biosynthesis</keyword>
<keyword id="KW-0963">Cytoplasm</keyword>
<keyword id="KW-0418">Kinase</keyword>
<keyword id="KW-0479">Metal-binding</keyword>
<keyword id="KW-0547">Nucleotide-binding</keyword>
<keyword id="KW-0630">Potassium</keyword>
<keyword id="KW-1185">Reference proteome</keyword>
<keyword id="KW-0808">Transferase</keyword>